<evidence type="ECO:0000269" key="1">
    <source>
    </source>
</evidence>
<evidence type="ECO:0000269" key="2">
    <source>
    </source>
</evidence>
<evidence type="ECO:0000269" key="3">
    <source>
    </source>
</evidence>
<evidence type="ECO:0000269" key="4">
    <source>
    </source>
</evidence>
<evidence type="ECO:0000269" key="5">
    <source>
    </source>
</evidence>
<evidence type="ECO:0000269" key="6">
    <source>
    </source>
</evidence>
<evidence type="ECO:0000269" key="7">
    <source>
    </source>
</evidence>
<evidence type="ECO:0000303" key="8">
    <source>
    </source>
</evidence>
<evidence type="ECO:0000303" key="9">
    <source>
    </source>
</evidence>
<evidence type="ECO:0000305" key="10"/>
<evidence type="ECO:0007829" key="11">
    <source>
        <dbReference type="PDB" id="5B66"/>
    </source>
</evidence>
<evidence type="ECO:0007829" key="12">
    <source>
        <dbReference type="PDB" id="7EDA"/>
    </source>
</evidence>
<comment type="function">
    <text evidence="3 4 6 10">One of the extrinsic, lumenal subunits of photosystem II (PSII). PSII is a light-driven water plastoquinone oxidoreductase, using light energy to abstract electrons from H(2)O, generating a proton gradient subsequently used for ATP formation. The extrinsic proteins stabilize the structure of photosystem II oxygen-evolving complex (OEC), the ion environment of oxygen evolution and protect the OEC against heat-induced inactivation (Probable). Requires cytochrome c-550 (PsbV) or OEC3 (PsbO) to bind to photosystem II (PSII).</text>
</comment>
<comment type="cofactor">
    <text evidence="2 4 5 6">PSII binds multiple chlorophylls, carotenoids and specific lipids.</text>
</comment>
<comment type="subunit">
    <text evidence="1 2 3 4 5 6 7">PSII is composed of 1 copy each of membrane proteins PsbA, PsbB, PsbC, PsbD, PsbE, PsbF, PsbH, PsbI, PsbJ, PsbK, PsbL, PsbM, PsbT, PsbX, PsbY, PsbZ, Psb30/Ycf12, peripheral proteins PsbO, CyanoQ (PsbQ), PsbU, PsbV and a large number of cofactors. It forms dimeric complexes.</text>
</comment>
<comment type="subcellular location">
    <subcellularLocation>
        <location evidence="2 4 5 6">Cellular thylakoid membrane</location>
        <topology evidence="2 4 5 6">Peripheral membrane protein</topology>
        <orientation evidence="2 4 5 6">Lumenal side</orientation>
    </subcellularLocation>
</comment>
<comment type="similarity">
    <text evidence="10">Belongs to the PsbU family.</text>
</comment>
<proteinExistence type="evidence at protein level"/>
<accession>P56152</accession>
<feature type="chain" id="PRO_0000219669" description="Photosystem II extrinsic protein U">
    <location>
        <begin position="1"/>
        <end position="104"/>
    </location>
</feature>
<feature type="helix" evidence="11">
    <location>
        <begin position="12"/>
        <end position="16"/>
    </location>
</feature>
<feature type="helix" evidence="11">
    <location>
        <begin position="20"/>
        <end position="22"/>
    </location>
</feature>
<feature type="strand" evidence="11">
    <location>
        <begin position="24"/>
        <end position="26"/>
    </location>
</feature>
<feature type="turn" evidence="11">
    <location>
        <begin position="27"/>
        <end position="29"/>
    </location>
</feature>
<feature type="helix" evidence="11">
    <location>
        <begin position="32"/>
        <end position="37"/>
    </location>
</feature>
<feature type="strand" evidence="12">
    <location>
        <begin position="38"/>
        <end position="40"/>
    </location>
</feature>
<feature type="turn" evidence="12">
    <location>
        <begin position="41"/>
        <end position="43"/>
    </location>
</feature>
<feature type="helix" evidence="11">
    <location>
        <begin position="44"/>
        <end position="52"/>
    </location>
</feature>
<feature type="helix" evidence="11">
    <location>
        <begin position="58"/>
        <end position="63"/>
    </location>
</feature>
<feature type="helix" evidence="11">
    <location>
        <begin position="69"/>
        <end position="78"/>
    </location>
</feature>
<feature type="helix" evidence="11">
    <location>
        <begin position="79"/>
        <end position="81"/>
    </location>
</feature>
<feature type="helix" evidence="11">
    <location>
        <begin position="89"/>
        <end position="92"/>
    </location>
</feature>
<feature type="helix" evidence="11">
    <location>
        <begin position="93"/>
        <end position="95"/>
    </location>
</feature>
<feature type="turn" evidence="11">
    <location>
        <begin position="96"/>
        <end position="98"/>
    </location>
</feature>
<keyword id="KW-0002">3D-structure</keyword>
<keyword id="KW-0903">Direct protein sequencing</keyword>
<keyword id="KW-0249">Electron transport</keyword>
<keyword id="KW-0472">Membrane</keyword>
<keyword id="KW-0602">Photosynthesis</keyword>
<keyword id="KW-0604">Photosystem II</keyword>
<keyword id="KW-0793">Thylakoid</keyword>
<keyword id="KW-0813">Transport</keyword>
<gene>
    <name type="primary">psbU</name>
</gene>
<sequence length="104" mass="11645">ATASTEEELVNVVDEKLGTAYGEKIDLNNTNIAAFIQYRGLYPTLAKLIVKNAPYESVEDVLNIPGLTERQKQILRENLEHFTVTEVETALVEGGDRYNNGLYK</sequence>
<organism>
    <name type="scientific">Thermostichus vulcanus</name>
    <name type="common">Synechococcus vulcanus</name>
    <dbReference type="NCBI Taxonomy" id="32053"/>
    <lineage>
        <taxon>Bacteria</taxon>
        <taxon>Bacillati</taxon>
        <taxon>Cyanobacteriota</taxon>
        <taxon>Cyanophyceae</taxon>
        <taxon>Thermostichales</taxon>
        <taxon>Thermostichaceae</taxon>
        <taxon>Thermostichus</taxon>
    </lineage>
</organism>
<name>PSBU_THEVL</name>
<reference key="1">
    <citation type="journal article" date="1992" name="FEBS Lett.">
        <title>Stoichiometric association of extrinsic cytochrome c550 and 12 kDa protein with a highly purified oxygen-evolving photosystem II core complex from Synechococcus vulcanus.</title>
        <authorList>
            <person name="Shen J.-R."/>
            <person name="Ikeuchi M."/>
            <person name="Inoue Y."/>
        </authorList>
    </citation>
    <scope>PROTEIN SEQUENCE OF 1-65</scope>
    <scope>SUGGESTION OF FUNCTION IN OXYGEN-EVOLUTION</scope>
    <scope>ASSOCIATION WITH PHOTOSYSTEM II</scope>
    <scope>SUBUNIT</scope>
</reference>
<reference key="2">
    <citation type="journal article" date="2002" name="Plant Cell Physiol.">
        <title>Low-molecular-mass polypeptide components of a photosystem II preparation from the thermophilic cyanobacterium Thermosynechococcus vulcanus.</title>
        <authorList>
            <person name="Kashino Y."/>
            <person name="Koike H."/>
            <person name="Yoshio M."/>
            <person name="Egashira H."/>
            <person name="Ikeuchi M."/>
            <person name="Pakrasi H.B."/>
            <person name="Satoh K."/>
        </authorList>
    </citation>
    <scope>PROTEIN SEQUENCE OF 25-34</scope>
    <scope>COMPOSITION OF PHOTOSYSTEM II</scope>
    <scope>SUBUNIT</scope>
</reference>
<reference key="3">
    <citation type="journal article" date="1993" name="J. Biol. Chem.">
        <title>Cellular localization of cytochrome c550. Its specific association with cyanobacterial photosystem II.</title>
        <authorList>
            <person name="Shen J.-R."/>
            <person name="Inoue Y."/>
        </authorList>
    </citation>
    <scope>TIGHT ASSOCIATION WITH PHOTOSYSTEM II</scope>
    <scope>SUBUNIT</scope>
</reference>
<reference key="4">
    <citation type="journal article" date="2003" name="Plant Cell Physiol.">
        <title>Comparison of binding and functional properties of two extrinsic components, cyt c550 and a 12 kDa protein, in cyanobacterial PSII with those in red algal PSII.</title>
        <authorList>
            <person name="Enami I."/>
            <person name="Iwai M."/>
            <person name="Akiyama A."/>
            <person name="Suzuki T."/>
            <person name="Okumura A."/>
            <person name="Katoh T."/>
            <person name="Tada O."/>
            <person name="Ohta H."/>
            <person name="Shen J.-R."/>
        </authorList>
    </citation>
    <scope>RECONSTITUTION EXPERIMENTS</scope>
</reference>
<reference key="5">
    <citation type="journal article" date="2003" name="Proc. Natl. Acad. Sci. U.S.A.">
        <title>Crystal structure of oxygen-evolving photosystem II from Thermosynechococcus vulcanus at 3.7-A resolution.</title>
        <authorList>
            <person name="Kamiya N."/>
            <person name="Shen J.-R."/>
        </authorList>
    </citation>
    <scope>X-RAY CRYSTALLOGRAPHY (3.70 ANGSTROMS) IN PHOTOSYSTEM II</scope>
    <scope>COFACTOR</scope>
    <scope>SUBUNIT</scope>
    <scope>SUBCELLULAR LOCATION</scope>
</reference>
<reference key="6">
    <citation type="journal article" date="2009" name="Proc. Natl. Acad. Sci. U.S.A.">
        <title>Location of chloride and its possible functions in oxygen-evolving photosystem II revealed by X-ray crystallography.</title>
        <authorList>
            <person name="Kawakami K."/>
            <person name="Umena Y."/>
            <person name="Kamiya N."/>
            <person name="Shen J.R."/>
        </authorList>
    </citation>
    <scope>X-RAY CRYSTALLOGRAPHY (3.7 ANGSTROMS) OF 7-104 IN PHOTOSYSTEM II</scope>
    <scope>FUNCTION</scope>
    <scope>COFACTOR</scope>
    <scope>SUBUNIT</scope>
    <scope>SUBCELLULAR LOCATION</scope>
</reference>
<reference key="7">
    <citation type="journal article" date="2011" name="Nature">
        <title>Crystal structure of oxygen-evolving photosystem II at a resolution of 1.9 A.</title>
        <authorList>
            <person name="Umena Y."/>
            <person name="Kawakami K."/>
            <person name="Shen J.R."/>
            <person name="Kamiya N."/>
        </authorList>
    </citation>
    <scope>X-RAY CRYSTALLOGRAPHY (1.9 ANGSTROMS) OF 8-104 IN PHOTOSYSTEM II</scope>
    <scope>COFACTOR</scope>
    <scope>SUBUNIT</scope>
    <scope>SUBCELLULAR LOCATION</scope>
</reference>
<reference key="8">
    <citation type="journal article" date="2013" name="Proc. Natl. Acad. Sci. U.S.A.">
        <title>Structure of Sr-substituted photosystem II at 2.1 A resolution and its implications in the mechanism of water oxidation.</title>
        <authorList>
            <person name="Koua F.H."/>
            <person name="Umena Y."/>
            <person name="Kawakami K."/>
            <person name="Shen J.R."/>
        </authorList>
    </citation>
    <scope>X-RAY CRYSTALLOGRAPHY (2.1 ANGSTROMS) OF 8-104 IN PHOTOSYSTEM II</scope>
    <scope>FUNCTION</scope>
    <scope>COFACTOR</scope>
    <scope>SUBUNIT</scope>
    <scope>SUBCELLULAR LOCATION</scope>
</reference>
<protein>
    <recommendedName>
        <fullName evidence="10">Photosystem II extrinsic protein U</fullName>
        <shortName>PSII-U</shortName>
        <shortName evidence="8">PsbU</shortName>
    </recommendedName>
    <alternativeName>
        <fullName evidence="9">Photosystem II 12 kDa extrinsic protein</fullName>
        <shortName evidence="10">PS II complex 12 kDa extrinsic protein</shortName>
    </alternativeName>
</protein>
<dbReference type="PDB" id="3A0B">
    <property type="method" value="X-ray"/>
    <property type="resolution" value="3.70 A"/>
    <property type="chains" value="U/u=7-104"/>
</dbReference>
<dbReference type="PDB" id="3A0H">
    <property type="method" value="X-ray"/>
    <property type="resolution" value="4.00 A"/>
    <property type="chains" value="U/u=7-104"/>
</dbReference>
<dbReference type="PDB" id="3WU2">
    <property type="method" value="X-ray"/>
    <property type="resolution" value="1.90 A"/>
    <property type="chains" value="U/u=1-104"/>
</dbReference>
<dbReference type="PDB" id="4IL6">
    <property type="method" value="X-ray"/>
    <property type="resolution" value="2.10 A"/>
    <property type="chains" value="U/u=8-104"/>
</dbReference>
<dbReference type="PDB" id="4UB6">
    <property type="method" value="X-ray"/>
    <property type="resolution" value="1.95 A"/>
    <property type="chains" value="U/u=1-104"/>
</dbReference>
<dbReference type="PDB" id="4UB8">
    <property type="method" value="X-ray"/>
    <property type="resolution" value="1.95 A"/>
    <property type="chains" value="U/u=1-104"/>
</dbReference>
<dbReference type="PDB" id="5B5E">
    <property type="method" value="X-ray"/>
    <property type="resolution" value="1.87 A"/>
    <property type="chains" value="U/u=1-104"/>
</dbReference>
<dbReference type="PDB" id="5B66">
    <property type="method" value="X-ray"/>
    <property type="resolution" value="1.85 A"/>
    <property type="chains" value="U/u=1-104"/>
</dbReference>
<dbReference type="PDB" id="5GTH">
    <property type="method" value="X-ray"/>
    <property type="resolution" value="2.50 A"/>
    <property type="chains" value="U/u=1-104"/>
</dbReference>
<dbReference type="PDB" id="5GTI">
    <property type="method" value="X-ray"/>
    <property type="resolution" value="2.50 A"/>
    <property type="chains" value="U/u=1-104"/>
</dbReference>
<dbReference type="PDB" id="5V2C">
    <property type="method" value="X-ray"/>
    <property type="resolution" value="1.90 A"/>
    <property type="chains" value="U/u=1-104"/>
</dbReference>
<dbReference type="PDB" id="5WS5">
    <property type="method" value="X-ray"/>
    <property type="resolution" value="2.35 A"/>
    <property type="chains" value="U/u=1-104"/>
</dbReference>
<dbReference type="PDB" id="5WS6">
    <property type="method" value="X-ray"/>
    <property type="resolution" value="2.35 A"/>
    <property type="chains" value="U/u=1-104"/>
</dbReference>
<dbReference type="PDB" id="6JLJ">
    <property type="method" value="X-ray"/>
    <property type="resolution" value="2.15 A"/>
    <property type="chains" value="U/u=1-104"/>
</dbReference>
<dbReference type="PDB" id="6JLK">
    <property type="method" value="X-ray"/>
    <property type="resolution" value="2.15 A"/>
    <property type="chains" value="U/u=1-104"/>
</dbReference>
<dbReference type="PDB" id="6JLL">
    <property type="method" value="X-ray"/>
    <property type="resolution" value="2.15 A"/>
    <property type="chains" value="U/u=1-104"/>
</dbReference>
<dbReference type="PDB" id="6JLM">
    <property type="method" value="X-ray"/>
    <property type="resolution" value="2.35 A"/>
    <property type="chains" value="U/u=1-104"/>
</dbReference>
<dbReference type="PDB" id="6JLN">
    <property type="method" value="X-ray"/>
    <property type="resolution" value="2.40 A"/>
    <property type="chains" value="U/u=1-104"/>
</dbReference>
<dbReference type="PDB" id="6JLO">
    <property type="method" value="X-ray"/>
    <property type="resolution" value="2.40 A"/>
    <property type="chains" value="U/u=1-104"/>
</dbReference>
<dbReference type="PDB" id="6JLP">
    <property type="method" value="X-ray"/>
    <property type="resolution" value="2.50 A"/>
    <property type="chains" value="U/u=1-104"/>
</dbReference>
<dbReference type="PDB" id="7CJI">
    <property type="method" value="X-ray"/>
    <property type="resolution" value="2.35 A"/>
    <property type="chains" value="U/u=1-104"/>
</dbReference>
<dbReference type="PDB" id="7CJJ">
    <property type="method" value="X-ray"/>
    <property type="resolution" value="2.40 A"/>
    <property type="chains" value="U/u=1-104"/>
</dbReference>
<dbReference type="PDB" id="7COU">
    <property type="method" value="X-ray"/>
    <property type="resolution" value="2.25 A"/>
    <property type="chains" value="U/u=1-104"/>
</dbReference>
<dbReference type="PDB" id="7D1T">
    <property type="method" value="EM"/>
    <property type="resolution" value="1.95 A"/>
    <property type="chains" value="U/u=8-104"/>
</dbReference>
<dbReference type="PDB" id="7D1U">
    <property type="method" value="EM"/>
    <property type="resolution" value="2.08 A"/>
    <property type="chains" value="U/u=8-104"/>
</dbReference>
<dbReference type="PDB" id="7EDA">
    <property type="method" value="EM"/>
    <property type="resolution" value="2.78 A"/>
    <property type="chains" value="U=1-104"/>
</dbReference>
<dbReference type="PDB" id="8GN0">
    <property type="method" value="X-ray"/>
    <property type="resolution" value="2.15 A"/>
    <property type="chains" value="U/u=1-104"/>
</dbReference>
<dbReference type="PDB" id="8GN1">
    <property type="method" value="X-ray"/>
    <property type="resolution" value="2.10 A"/>
    <property type="chains" value="U/u=1-104"/>
</dbReference>
<dbReference type="PDB" id="8GN2">
    <property type="method" value="X-ray"/>
    <property type="resolution" value="1.95 A"/>
    <property type="chains" value="U/u=1-104"/>
</dbReference>
<dbReference type="PDB" id="8IR5">
    <property type="method" value="X-ray"/>
    <property type="resolution" value="2.15 A"/>
    <property type="chains" value="U/u=1-104"/>
</dbReference>
<dbReference type="PDB" id="8IR6">
    <property type="method" value="X-ray"/>
    <property type="resolution" value="2.20 A"/>
    <property type="chains" value="U/u=1-104"/>
</dbReference>
<dbReference type="PDB" id="8IR7">
    <property type="method" value="X-ray"/>
    <property type="resolution" value="2.25 A"/>
    <property type="chains" value="U/u=1-104"/>
</dbReference>
<dbReference type="PDB" id="8IR8">
    <property type="method" value="X-ray"/>
    <property type="resolution" value="2.25 A"/>
    <property type="chains" value="U/u=1-104"/>
</dbReference>
<dbReference type="PDB" id="8IR9">
    <property type="method" value="X-ray"/>
    <property type="resolution" value="2.20 A"/>
    <property type="chains" value="U/u=1-104"/>
</dbReference>
<dbReference type="PDB" id="8IRA">
    <property type="method" value="X-ray"/>
    <property type="resolution" value="2.20 A"/>
    <property type="chains" value="U/u=1-104"/>
</dbReference>
<dbReference type="PDB" id="8IRB">
    <property type="method" value="X-ray"/>
    <property type="resolution" value="2.30 A"/>
    <property type="chains" value="U/u=1-104"/>
</dbReference>
<dbReference type="PDB" id="8IRC">
    <property type="method" value="X-ray"/>
    <property type="resolution" value="2.25 A"/>
    <property type="chains" value="U/u=1-104"/>
</dbReference>
<dbReference type="PDB" id="8IRD">
    <property type="method" value="X-ray"/>
    <property type="resolution" value="2.30 A"/>
    <property type="chains" value="U/u=1-104"/>
</dbReference>
<dbReference type="PDB" id="8IRE">
    <property type="method" value="X-ray"/>
    <property type="resolution" value="2.25 A"/>
    <property type="chains" value="U/u=1-104"/>
</dbReference>
<dbReference type="PDB" id="8IRF">
    <property type="method" value="X-ray"/>
    <property type="resolution" value="2.25 A"/>
    <property type="chains" value="U/u=1-104"/>
</dbReference>
<dbReference type="PDB" id="8IRG">
    <property type="method" value="X-ray"/>
    <property type="resolution" value="2.30 A"/>
    <property type="chains" value="U/u=1-104"/>
</dbReference>
<dbReference type="PDB" id="8IRH">
    <property type="method" value="X-ray"/>
    <property type="resolution" value="2.25 A"/>
    <property type="chains" value="U/u=1-104"/>
</dbReference>
<dbReference type="PDB" id="8IRI">
    <property type="method" value="X-ray"/>
    <property type="resolution" value="2.25 A"/>
    <property type="chains" value="U/u=1-104"/>
</dbReference>
<dbReference type="PDBsum" id="3A0B"/>
<dbReference type="PDBsum" id="3A0H"/>
<dbReference type="PDBsum" id="3WU2"/>
<dbReference type="PDBsum" id="4IL6"/>
<dbReference type="PDBsum" id="4UB6"/>
<dbReference type="PDBsum" id="4UB8"/>
<dbReference type="PDBsum" id="5B5E"/>
<dbReference type="PDBsum" id="5B66"/>
<dbReference type="PDBsum" id="5GTH"/>
<dbReference type="PDBsum" id="5GTI"/>
<dbReference type="PDBsum" id="5V2C"/>
<dbReference type="PDBsum" id="5WS5"/>
<dbReference type="PDBsum" id="5WS6"/>
<dbReference type="PDBsum" id="6JLJ"/>
<dbReference type="PDBsum" id="6JLK"/>
<dbReference type="PDBsum" id="6JLL"/>
<dbReference type="PDBsum" id="6JLM"/>
<dbReference type="PDBsum" id="6JLN"/>
<dbReference type="PDBsum" id="6JLO"/>
<dbReference type="PDBsum" id="6JLP"/>
<dbReference type="PDBsum" id="7CJI"/>
<dbReference type="PDBsum" id="7CJJ"/>
<dbReference type="PDBsum" id="7COU"/>
<dbReference type="PDBsum" id="7D1T"/>
<dbReference type="PDBsum" id="7D1U"/>
<dbReference type="PDBsum" id="7EDA"/>
<dbReference type="PDBsum" id="8GN0"/>
<dbReference type="PDBsum" id="8GN1"/>
<dbReference type="PDBsum" id="8GN2"/>
<dbReference type="PDBsum" id="8IR5"/>
<dbReference type="PDBsum" id="8IR6"/>
<dbReference type="PDBsum" id="8IR7"/>
<dbReference type="PDBsum" id="8IR8"/>
<dbReference type="PDBsum" id="8IR9"/>
<dbReference type="PDBsum" id="8IRA"/>
<dbReference type="PDBsum" id="8IRB"/>
<dbReference type="PDBsum" id="8IRC"/>
<dbReference type="PDBsum" id="8IRD"/>
<dbReference type="PDBsum" id="8IRE"/>
<dbReference type="PDBsum" id="8IRF"/>
<dbReference type="PDBsum" id="8IRG"/>
<dbReference type="PDBsum" id="8IRH"/>
<dbReference type="PDBsum" id="8IRI"/>
<dbReference type="EMDB" id="EMD-30547"/>
<dbReference type="EMDB" id="EMD-30548"/>
<dbReference type="EMDB" id="EMD-31062"/>
<dbReference type="SMR" id="P56152"/>
<dbReference type="DIP" id="DIP-48860N"/>
<dbReference type="IntAct" id="P56152">
    <property type="interactions" value="1"/>
</dbReference>
<dbReference type="EvolutionaryTrace" id="P56152"/>
<dbReference type="GO" id="GO:0019898">
    <property type="term" value="C:extrinsic component of membrane"/>
    <property type="evidence" value="ECO:0007669"/>
    <property type="project" value="InterPro"/>
</dbReference>
<dbReference type="GO" id="GO:0009654">
    <property type="term" value="C:photosystem II oxygen evolving complex"/>
    <property type="evidence" value="ECO:0007669"/>
    <property type="project" value="InterPro"/>
</dbReference>
<dbReference type="GO" id="GO:0031676">
    <property type="term" value="C:plasma membrane-derived thylakoid membrane"/>
    <property type="evidence" value="ECO:0007669"/>
    <property type="project" value="UniProtKB-SubCell"/>
</dbReference>
<dbReference type="GO" id="GO:0015979">
    <property type="term" value="P:photosynthesis"/>
    <property type="evidence" value="ECO:0007669"/>
    <property type="project" value="UniProtKB-KW"/>
</dbReference>
<dbReference type="GO" id="GO:0042549">
    <property type="term" value="P:photosystem II stabilization"/>
    <property type="evidence" value="ECO:0007669"/>
    <property type="project" value="InterPro"/>
</dbReference>
<dbReference type="Gene3D" id="1.10.150.320">
    <property type="entry name" value="Photosystem II 12 kDa extrinsic protein"/>
    <property type="match status" value="1"/>
</dbReference>
<dbReference type="InterPro" id="IPR010527">
    <property type="entry name" value="PSII_PsbU"/>
</dbReference>
<dbReference type="NCBIfam" id="NF002708">
    <property type="entry name" value="PRK02515.1"/>
    <property type="match status" value="1"/>
</dbReference>
<dbReference type="Pfam" id="PF06514">
    <property type="entry name" value="PsbU"/>
    <property type="match status" value="1"/>
</dbReference>
<dbReference type="SUPFAM" id="SSF81585">
    <property type="entry name" value="PsbU/PolX domain-like"/>
    <property type="match status" value="1"/>
</dbReference>